<dbReference type="EMBL" id="BX284606">
    <property type="protein sequence ID" value="CAA90294.1"/>
    <property type="molecule type" value="Genomic_DNA"/>
</dbReference>
<dbReference type="EMBL" id="BX284606">
    <property type="protein sequence ID" value="CBH29658.1"/>
    <property type="molecule type" value="Genomic_DNA"/>
</dbReference>
<dbReference type="PIR" id="T21033">
    <property type="entry name" value="T21033"/>
</dbReference>
<dbReference type="RefSeq" id="NP_001257197.1">
    <molecule id="G5EGN8-1"/>
    <property type="nucleotide sequence ID" value="NM_001270268.1"/>
</dbReference>
<dbReference type="RefSeq" id="NP_001257198.1">
    <property type="nucleotide sequence ID" value="NM_001270269.1"/>
</dbReference>
<dbReference type="RefSeq" id="NP_001366722.1">
    <molecule id="G5EGN8-2"/>
    <property type="nucleotide sequence ID" value="NM_001381126.1"/>
</dbReference>
<dbReference type="SMR" id="G5EGN8"/>
<dbReference type="FunCoup" id="G5EGN8">
    <property type="interactions" value="48"/>
</dbReference>
<dbReference type="PaxDb" id="6239-F16H9.2b"/>
<dbReference type="EnsemblMetazoa" id="F16H9.2a.1">
    <molecule id="G5EGN8-2"/>
    <property type="protein sequence ID" value="F16H9.2a.1"/>
    <property type="gene ID" value="WBGene00008901"/>
</dbReference>
<dbReference type="EnsemblMetazoa" id="F16H9.2a.2">
    <molecule id="G5EGN8-2"/>
    <property type="protein sequence ID" value="F16H9.2a.2"/>
    <property type="gene ID" value="WBGene00008901"/>
</dbReference>
<dbReference type="EnsemblMetazoa" id="F16H9.2b.1">
    <molecule id="G5EGN8-1"/>
    <property type="protein sequence ID" value="F16H9.2b.1"/>
    <property type="gene ID" value="WBGene00008901"/>
</dbReference>
<dbReference type="GeneID" id="41656994"/>
<dbReference type="KEGG" id="cel:CELE_F16H9.2"/>
<dbReference type="UCSC" id="F16H9.2">
    <property type="organism name" value="c. elegans"/>
</dbReference>
<dbReference type="AGR" id="WB:WBGene00008901"/>
<dbReference type="CTD" id="41656994"/>
<dbReference type="WormBase" id="F16H9.2a">
    <molecule id="G5EGN8-2"/>
    <property type="protein sequence ID" value="CE05645"/>
    <property type="gene ID" value="WBGene00008901"/>
    <property type="gene designation" value="nhr-27"/>
</dbReference>
<dbReference type="WormBase" id="F16H9.2b">
    <molecule id="G5EGN8-1"/>
    <property type="protein sequence ID" value="CE44219"/>
    <property type="gene ID" value="WBGene00008901"/>
    <property type="gene designation" value="nhr-27"/>
</dbReference>
<dbReference type="eggNOG" id="ENOG502TGEA">
    <property type="taxonomic scope" value="Eukaryota"/>
</dbReference>
<dbReference type="GeneTree" id="ENSGT00970000195839"/>
<dbReference type="HOGENOM" id="CLU_007368_3_0_1"/>
<dbReference type="InParanoid" id="G5EGN8"/>
<dbReference type="OMA" id="RATHSEC"/>
<dbReference type="OrthoDB" id="5866087at2759"/>
<dbReference type="PhylomeDB" id="G5EGN8"/>
<dbReference type="PRO" id="PR:G5EGN8"/>
<dbReference type="Proteomes" id="UP000001940">
    <property type="component" value="Chromosome X"/>
</dbReference>
<dbReference type="Bgee" id="WBGene00008901">
    <property type="expression patterns" value="Expressed in pharyngeal muscle cell (C elegans)"/>
</dbReference>
<dbReference type="ExpressionAtlas" id="G5EGN8">
    <property type="expression patterns" value="baseline and differential"/>
</dbReference>
<dbReference type="GO" id="GO:0005634">
    <property type="term" value="C:nucleus"/>
    <property type="evidence" value="ECO:0007669"/>
    <property type="project" value="UniProtKB-SubCell"/>
</dbReference>
<dbReference type="GO" id="GO:0003700">
    <property type="term" value="F:DNA-binding transcription factor activity"/>
    <property type="evidence" value="ECO:0007669"/>
    <property type="project" value="InterPro"/>
</dbReference>
<dbReference type="GO" id="GO:0043565">
    <property type="term" value="F:sequence-specific DNA binding"/>
    <property type="evidence" value="ECO:0007669"/>
    <property type="project" value="InterPro"/>
</dbReference>
<dbReference type="GO" id="GO:0008270">
    <property type="term" value="F:zinc ion binding"/>
    <property type="evidence" value="ECO:0007669"/>
    <property type="project" value="UniProtKB-KW"/>
</dbReference>
<dbReference type="GO" id="GO:0008340">
    <property type="term" value="P:determination of adult lifespan"/>
    <property type="evidence" value="ECO:0000316"/>
    <property type="project" value="UniProtKB"/>
</dbReference>
<dbReference type="Gene3D" id="3.30.50.10">
    <property type="entry name" value="Erythroid Transcription Factor GATA-1, subunit A"/>
    <property type="match status" value="1"/>
</dbReference>
<dbReference type="Gene3D" id="1.10.565.10">
    <property type="entry name" value="Retinoid X Receptor"/>
    <property type="match status" value="1"/>
</dbReference>
<dbReference type="InterPro" id="IPR035500">
    <property type="entry name" value="NHR-like_dom_sf"/>
</dbReference>
<dbReference type="InterPro" id="IPR000536">
    <property type="entry name" value="Nucl_hrmn_rcpt_lig-bd"/>
</dbReference>
<dbReference type="InterPro" id="IPR001628">
    <property type="entry name" value="Znf_hrmn_rcpt"/>
</dbReference>
<dbReference type="InterPro" id="IPR013088">
    <property type="entry name" value="Znf_NHR/GATA"/>
</dbReference>
<dbReference type="PANTHER" id="PTHR45886:SF9">
    <property type="entry name" value="NR LBD DOMAIN-CONTAINING PROTEIN-RELATED"/>
    <property type="match status" value="1"/>
</dbReference>
<dbReference type="PANTHER" id="PTHR45886">
    <property type="entry name" value="NUCLEAR HORMONE RECEPTOR FAMILY-RELATED-RELATED"/>
    <property type="match status" value="1"/>
</dbReference>
<dbReference type="Pfam" id="PF00104">
    <property type="entry name" value="Hormone_recep"/>
    <property type="match status" value="1"/>
</dbReference>
<dbReference type="Pfam" id="PF00105">
    <property type="entry name" value="zf-C4"/>
    <property type="match status" value="1"/>
</dbReference>
<dbReference type="PRINTS" id="PR00047">
    <property type="entry name" value="STROIDFINGER"/>
</dbReference>
<dbReference type="SMART" id="SM00430">
    <property type="entry name" value="HOLI"/>
    <property type="match status" value="1"/>
</dbReference>
<dbReference type="SMART" id="SM00399">
    <property type="entry name" value="ZnF_C4"/>
    <property type="match status" value="1"/>
</dbReference>
<dbReference type="SUPFAM" id="SSF57716">
    <property type="entry name" value="Glucocorticoid receptor-like (DNA-binding domain)"/>
    <property type="match status" value="1"/>
</dbReference>
<dbReference type="SUPFAM" id="SSF48508">
    <property type="entry name" value="Nuclear receptor ligand-binding domain"/>
    <property type="match status" value="1"/>
</dbReference>
<dbReference type="PROSITE" id="PS51843">
    <property type="entry name" value="NR_LBD"/>
    <property type="match status" value="1"/>
</dbReference>
<dbReference type="PROSITE" id="PS51030">
    <property type="entry name" value="NUCLEAR_REC_DBD_2"/>
    <property type="match status" value="1"/>
</dbReference>
<accession>G5EGN8</accession>
<accession>Q19500</accession>
<sequence length="353" mass="40645">MERGSPGSSKSVSTFTPDSMSTYVSNCVVCGRLTSLFNYGAHSCSACGSFLRRTLASSKFLDDCKYSGNCFENFKRAIHFECKFCRLHKCVQKGMLDLSRYTHLERLICELSEFDSKRETLFLTMTVSNGFKAEELMWQSSVSLVKKPPHLVFNSHDWGFMNQVTIIDFLKKLEFSKFLSSQDLRSFLKCTHFTQVILKSAVISYNANQNYMSFPNKIDIFPETVTEGTSISVNLQNRIRCRLVNRLIELKVTHEEMLLLCAIAFSNPAIPELSENGRTLLNSYQNVYRSALFQYCSTAYQRNGPSRFNDLLFLLHVVTKTHDDIKKYFTLFQFFQPTEQPSQVHQDVIEFIN</sequence>
<feature type="chain" id="PRO_0000454930" description="Nuclear hormone receptor family member nhr-27">
    <location>
        <begin position="1"/>
        <end position="353"/>
    </location>
</feature>
<feature type="domain" description="NR LBD" evidence="3">
    <location>
        <begin position="119"/>
        <end position="351"/>
    </location>
</feature>
<feature type="DNA-binding region" description="Nuclear receptor" evidence="2">
    <location>
        <begin position="24"/>
        <end position="102"/>
    </location>
</feature>
<feature type="zinc finger region" description="NR C4-type" evidence="2">
    <location>
        <begin position="27"/>
        <end position="47"/>
    </location>
</feature>
<feature type="zinc finger region" description="NR C4-type" evidence="2">
    <location>
        <begin position="64"/>
        <end position="85"/>
    </location>
</feature>
<feature type="region of interest" description="AF-2" evidence="3">
    <location>
        <begin position="340"/>
        <end position="351"/>
    </location>
</feature>
<feature type="splice variant" id="VSP_061416" description="In isoform a." evidence="5">
    <location>
        <begin position="1"/>
        <end position="19"/>
    </location>
</feature>
<comment type="function">
    <text evidence="1 4">Ligand-activated transcription factor (By similarity). Involved in lifespan extension in a manner dependent upon mitochondrial function (PubMed:24107417).</text>
</comment>
<comment type="subcellular location">
    <subcellularLocation>
        <location evidence="2">Nucleus</location>
    </subcellularLocation>
</comment>
<comment type="alternative products">
    <event type="alternative splicing"/>
    <isoform>
        <id>G5EGN8-1</id>
        <name evidence="8">b</name>
        <sequence type="displayed"/>
    </isoform>
    <isoform>
        <id>G5EGN8-2</id>
        <name evidence="7">a</name>
        <sequence type="described" ref="VSP_061416"/>
    </isoform>
</comment>
<comment type="disruption phenotype">
    <text evidence="4">RNAi-mediated knockdown in a Rieske iron-sulfur protein isp-1 mutant background reduces life-span extension, causes a mild reduction in fertility, and reduces induction of expression of glutathione S-transferase gst-4.</text>
</comment>
<comment type="similarity">
    <text evidence="5">Belongs to the nuclear hormone receptor family.</text>
</comment>
<evidence type="ECO:0000250" key="1">
    <source>
        <dbReference type="UniProtKB" id="Q96RI1"/>
    </source>
</evidence>
<evidence type="ECO:0000255" key="2">
    <source>
        <dbReference type="PROSITE-ProRule" id="PRU00407"/>
    </source>
</evidence>
<evidence type="ECO:0000255" key="3">
    <source>
        <dbReference type="PROSITE-ProRule" id="PRU01189"/>
    </source>
</evidence>
<evidence type="ECO:0000269" key="4">
    <source>
    </source>
</evidence>
<evidence type="ECO:0000305" key="5"/>
<evidence type="ECO:0000312" key="6">
    <source>
        <dbReference type="Proteomes" id="UP000001940"/>
    </source>
</evidence>
<evidence type="ECO:0000312" key="7">
    <source>
        <dbReference type="WormBase" id="F16H9.2a"/>
    </source>
</evidence>
<evidence type="ECO:0000312" key="8">
    <source>
        <dbReference type="WormBase" id="F16H9.2b"/>
    </source>
</evidence>
<protein>
    <recommendedName>
        <fullName evidence="5">Nuclear hormone receptor family member nhr-27</fullName>
    </recommendedName>
</protein>
<name>NHR27_CAEEL</name>
<gene>
    <name evidence="8" type="primary">nhr-27</name>
    <name evidence="8" type="ORF">F16H9.2</name>
</gene>
<organism evidence="6">
    <name type="scientific">Caenorhabditis elegans</name>
    <dbReference type="NCBI Taxonomy" id="6239"/>
    <lineage>
        <taxon>Eukaryota</taxon>
        <taxon>Metazoa</taxon>
        <taxon>Ecdysozoa</taxon>
        <taxon>Nematoda</taxon>
        <taxon>Chromadorea</taxon>
        <taxon>Rhabditida</taxon>
        <taxon>Rhabditina</taxon>
        <taxon>Rhabditomorpha</taxon>
        <taxon>Rhabditoidea</taxon>
        <taxon>Rhabditidae</taxon>
        <taxon>Peloderinae</taxon>
        <taxon>Caenorhabditis</taxon>
    </lineage>
</organism>
<proteinExistence type="inferred from homology"/>
<reference evidence="6" key="1">
    <citation type="journal article" date="1998" name="Science">
        <title>Genome sequence of the nematode C. elegans: a platform for investigating biology.</title>
        <authorList>
            <consortium name="The C. elegans sequencing consortium"/>
        </authorList>
    </citation>
    <scope>NUCLEOTIDE SEQUENCE [LARGE SCALE GENOMIC DNA]</scope>
    <source>
        <strain evidence="6">Bristol N2</strain>
    </source>
</reference>
<reference evidence="5" key="2">
    <citation type="journal article" date="2013" name="Aging (Albany NY)">
        <title>TAF-4 is required for the life extension of isp-1, clk-1 and tpk-1 Mit mutants.</title>
        <authorList>
            <person name="Khan M.H."/>
            <person name="Ligon M."/>
            <person name="Hussey L.R."/>
            <person name="Hufnal B."/>
            <person name="Farber R. II"/>
            <person name="Munkacsy E."/>
            <person name="Rodriguez A."/>
            <person name="Dillow A."/>
            <person name="Kahlig E."/>
            <person name="Rea S.L."/>
        </authorList>
    </citation>
    <scope>FUNCTION</scope>
    <scope>DISRUPTION PHENOTYPE</scope>
</reference>
<keyword id="KW-0025">Alternative splicing</keyword>
<keyword id="KW-0238">DNA-binding</keyword>
<keyword id="KW-0479">Metal-binding</keyword>
<keyword id="KW-0539">Nucleus</keyword>
<keyword id="KW-0675">Receptor</keyword>
<keyword id="KW-1185">Reference proteome</keyword>
<keyword id="KW-0804">Transcription</keyword>
<keyword id="KW-0805">Transcription regulation</keyword>
<keyword id="KW-0862">Zinc</keyword>
<keyword id="KW-0863">Zinc-finger</keyword>